<name>SYS_RICFE</name>
<accession>Q4UK35</accession>
<proteinExistence type="inferred from homology"/>
<protein>
    <recommendedName>
        <fullName evidence="1">Serine--tRNA ligase</fullName>
        <ecNumber evidence="1">6.1.1.11</ecNumber>
    </recommendedName>
    <alternativeName>
        <fullName evidence="1">Seryl-tRNA synthetase</fullName>
        <shortName evidence="1">SerRS</shortName>
    </alternativeName>
    <alternativeName>
        <fullName evidence="1">Seryl-tRNA(Ser/Sec) synthetase</fullName>
    </alternativeName>
</protein>
<organism>
    <name type="scientific">Rickettsia felis (strain ATCC VR-1525 / URRWXCal2)</name>
    <name type="common">Rickettsia azadi</name>
    <dbReference type="NCBI Taxonomy" id="315456"/>
    <lineage>
        <taxon>Bacteria</taxon>
        <taxon>Pseudomonadati</taxon>
        <taxon>Pseudomonadota</taxon>
        <taxon>Alphaproteobacteria</taxon>
        <taxon>Rickettsiales</taxon>
        <taxon>Rickettsiaceae</taxon>
        <taxon>Rickettsieae</taxon>
        <taxon>Rickettsia</taxon>
        <taxon>spotted fever group</taxon>
    </lineage>
</organism>
<feature type="chain" id="PRO_0000278054" description="Serine--tRNA ligase">
    <location>
        <begin position="1"/>
        <end position="425"/>
    </location>
</feature>
<feature type="binding site" evidence="1">
    <location>
        <begin position="228"/>
        <end position="230"/>
    </location>
    <ligand>
        <name>L-serine</name>
        <dbReference type="ChEBI" id="CHEBI:33384"/>
    </ligand>
</feature>
<feature type="binding site" evidence="1">
    <location>
        <begin position="259"/>
        <end position="261"/>
    </location>
    <ligand>
        <name>ATP</name>
        <dbReference type="ChEBI" id="CHEBI:30616"/>
    </ligand>
</feature>
<feature type="binding site" evidence="1">
    <location>
        <position position="282"/>
    </location>
    <ligand>
        <name>L-serine</name>
        <dbReference type="ChEBI" id="CHEBI:33384"/>
    </ligand>
</feature>
<feature type="binding site" evidence="1">
    <location>
        <begin position="346"/>
        <end position="349"/>
    </location>
    <ligand>
        <name>ATP</name>
        <dbReference type="ChEBI" id="CHEBI:30616"/>
    </ligand>
</feature>
<feature type="binding site" evidence="1">
    <location>
        <position position="382"/>
    </location>
    <ligand>
        <name>L-serine</name>
        <dbReference type="ChEBI" id="CHEBI:33384"/>
    </ligand>
</feature>
<evidence type="ECO:0000255" key="1">
    <source>
        <dbReference type="HAMAP-Rule" id="MF_00176"/>
    </source>
</evidence>
<keyword id="KW-0030">Aminoacyl-tRNA synthetase</keyword>
<keyword id="KW-0067">ATP-binding</keyword>
<keyword id="KW-0963">Cytoplasm</keyword>
<keyword id="KW-0436">Ligase</keyword>
<keyword id="KW-0547">Nucleotide-binding</keyword>
<keyword id="KW-0648">Protein biosynthesis</keyword>
<gene>
    <name evidence="1" type="primary">serS</name>
    <name type="ordered locus">RF_1249</name>
</gene>
<reference key="1">
    <citation type="journal article" date="2005" name="PLoS Biol.">
        <title>The genome sequence of Rickettsia felis identifies the first putative conjugative plasmid in an obligate intracellular parasite.</title>
        <authorList>
            <person name="Ogata H."/>
            <person name="Renesto P."/>
            <person name="Audic S."/>
            <person name="Robert C."/>
            <person name="Blanc G."/>
            <person name="Fournier P.-E."/>
            <person name="Parinello H."/>
            <person name="Claverie J.-M."/>
            <person name="Raoult D."/>
        </authorList>
    </citation>
    <scope>NUCLEOTIDE SEQUENCE [LARGE SCALE GENOMIC DNA]</scope>
    <source>
        <strain>ATCC VR-1525 / URRWXCal2</strain>
    </source>
</reference>
<sequence length="425" mass="48487">MLNIKWIRENQELFDEKLSQRFIEPMSSKIAMLDGEKRKITCLIQEFQHARKVKSKILGNMASKSGEEFEGLQRDVKHINEKLEELEQDLNNNNELNELLNMLPNIPDEEVPYGMDESMNKLVRTYGETNPNALNKQHFELGTKLNLMDFEQTAKISGARFVTLKGDLAKLERALINFMIDVHTKEFDFFEISPPVLVRDNAMYNAGQLPKFAEESFATTNGYRLIPTAEVSLVNIVADTIIPREKLPMRYVAYTPCFRSEAGSSGRDTRGMIRLHQFGKVELVSITTTEESKNEHEYITNASETILQKLNLPYRVMLLCTGDMGFAAKKTYDIEVWLPGQKQYREIASCSNCGDFQARRMKARYKEFGSNETTLVHTLNASGLPIGRTMVAILENYQNEDGSITIPDVLINYMGGLQKITTYSE</sequence>
<dbReference type="EC" id="6.1.1.11" evidence="1"/>
<dbReference type="EMBL" id="CP000053">
    <property type="protein sequence ID" value="AAY62100.1"/>
    <property type="molecule type" value="Genomic_DNA"/>
</dbReference>
<dbReference type="SMR" id="Q4UK35"/>
<dbReference type="STRING" id="315456.RF_1249"/>
<dbReference type="KEGG" id="rfe:RF_1249"/>
<dbReference type="eggNOG" id="COG0172">
    <property type="taxonomic scope" value="Bacteria"/>
</dbReference>
<dbReference type="HOGENOM" id="CLU_023797_1_1_5"/>
<dbReference type="OrthoDB" id="9804647at2"/>
<dbReference type="UniPathway" id="UPA00906">
    <property type="reaction ID" value="UER00895"/>
</dbReference>
<dbReference type="Proteomes" id="UP000008548">
    <property type="component" value="Chromosome"/>
</dbReference>
<dbReference type="GO" id="GO:0005737">
    <property type="term" value="C:cytoplasm"/>
    <property type="evidence" value="ECO:0007669"/>
    <property type="project" value="UniProtKB-SubCell"/>
</dbReference>
<dbReference type="GO" id="GO:0005524">
    <property type="term" value="F:ATP binding"/>
    <property type="evidence" value="ECO:0007669"/>
    <property type="project" value="UniProtKB-UniRule"/>
</dbReference>
<dbReference type="GO" id="GO:0004828">
    <property type="term" value="F:serine-tRNA ligase activity"/>
    <property type="evidence" value="ECO:0007669"/>
    <property type="project" value="UniProtKB-UniRule"/>
</dbReference>
<dbReference type="GO" id="GO:0016260">
    <property type="term" value="P:selenocysteine biosynthetic process"/>
    <property type="evidence" value="ECO:0007669"/>
    <property type="project" value="UniProtKB-UniRule"/>
</dbReference>
<dbReference type="GO" id="GO:0006434">
    <property type="term" value="P:seryl-tRNA aminoacylation"/>
    <property type="evidence" value="ECO:0007669"/>
    <property type="project" value="UniProtKB-UniRule"/>
</dbReference>
<dbReference type="CDD" id="cd00770">
    <property type="entry name" value="SerRS_core"/>
    <property type="match status" value="1"/>
</dbReference>
<dbReference type="Gene3D" id="3.30.930.10">
    <property type="entry name" value="Bira Bifunctional Protein, Domain 2"/>
    <property type="match status" value="1"/>
</dbReference>
<dbReference type="Gene3D" id="1.10.287.40">
    <property type="entry name" value="Serine-tRNA synthetase, tRNA binding domain"/>
    <property type="match status" value="1"/>
</dbReference>
<dbReference type="HAMAP" id="MF_00176">
    <property type="entry name" value="Ser_tRNA_synth_type1"/>
    <property type="match status" value="1"/>
</dbReference>
<dbReference type="InterPro" id="IPR002314">
    <property type="entry name" value="aa-tRNA-synt_IIb"/>
</dbReference>
<dbReference type="InterPro" id="IPR006195">
    <property type="entry name" value="aa-tRNA-synth_II"/>
</dbReference>
<dbReference type="InterPro" id="IPR045864">
    <property type="entry name" value="aa-tRNA-synth_II/BPL/LPL"/>
</dbReference>
<dbReference type="InterPro" id="IPR002317">
    <property type="entry name" value="Ser-tRNA-ligase_type_1"/>
</dbReference>
<dbReference type="InterPro" id="IPR015866">
    <property type="entry name" value="Ser-tRNA-synth_1_N"/>
</dbReference>
<dbReference type="InterPro" id="IPR042103">
    <property type="entry name" value="SerRS_1_N_sf"/>
</dbReference>
<dbReference type="InterPro" id="IPR033729">
    <property type="entry name" value="SerRS_core"/>
</dbReference>
<dbReference type="InterPro" id="IPR010978">
    <property type="entry name" value="tRNA-bd_arm"/>
</dbReference>
<dbReference type="NCBIfam" id="TIGR00414">
    <property type="entry name" value="serS"/>
    <property type="match status" value="1"/>
</dbReference>
<dbReference type="PANTHER" id="PTHR43697:SF1">
    <property type="entry name" value="SERINE--TRNA LIGASE"/>
    <property type="match status" value="1"/>
</dbReference>
<dbReference type="PANTHER" id="PTHR43697">
    <property type="entry name" value="SERYL-TRNA SYNTHETASE"/>
    <property type="match status" value="1"/>
</dbReference>
<dbReference type="Pfam" id="PF02403">
    <property type="entry name" value="Seryl_tRNA_N"/>
    <property type="match status" value="1"/>
</dbReference>
<dbReference type="Pfam" id="PF00587">
    <property type="entry name" value="tRNA-synt_2b"/>
    <property type="match status" value="1"/>
</dbReference>
<dbReference type="PIRSF" id="PIRSF001529">
    <property type="entry name" value="Ser-tRNA-synth_IIa"/>
    <property type="match status" value="1"/>
</dbReference>
<dbReference type="PRINTS" id="PR00981">
    <property type="entry name" value="TRNASYNTHSER"/>
</dbReference>
<dbReference type="SUPFAM" id="SSF55681">
    <property type="entry name" value="Class II aaRS and biotin synthetases"/>
    <property type="match status" value="1"/>
</dbReference>
<dbReference type="SUPFAM" id="SSF46589">
    <property type="entry name" value="tRNA-binding arm"/>
    <property type="match status" value="1"/>
</dbReference>
<dbReference type="PROSITE" id="PS50862">
    <property type="entry name" value="AA_TRNA_LIGASE_II"/>
    <property type="match status" value="1"/>
</dbReference>
<comment type="function">
    <text evidence="1">Catalyzes the attachment of serine to tRNA(Ser). Is also able to aminoacylate tRNA(Sec) with serine, to form the misacylated tRNA L-seryl-tRNA(Sec), which will be further converted into selenocysteinyl-tRNA(Sec).</text>
</comment>
<comment type="catalytic activity">
    <reaction evidence="1">
        <text>tRNA(Ser) + L-serine + ATP = L-seryl-tRNA(Ser) + AMP + diphosphate + H(+)</text>
        <dbReference type="Rhea" id="RHEA:12292"/>
        <dbReference type="Rhea" id="RHEA-COMP:9669"/>
        <dbReference type="Rhea" id="RHEA-COMP:9703"/>
        <dbReference type="ChEBI" id="CHEBI:15378"/>
        <dbReference type="ChEBI" id="CHEBI:30616"/>
        <dbReference type="ChEBI" id="CHEBI:33019"/>
        <dbReference type="ChEBI" id="CHEBI:33384"/>
        <dbReference type="ChEBI" id="CHEBI:78442"/>
        <dbReference type="ChEBI" id="CHEBI:78533"/>
        <dbReference type="ChEBI" id="CHEBI:456215"/>
        <dbReference type="EC" id="6.1.1.11"/>
    </reaction>
</comment>
<comment type="catalytic activity">
    <reaction evidence="1">
        <text>tRNA(Sec) + L-serine + ATP = L-seryl-tRNA(Sec) + AMP + diphosphate + H(+)</text>
        <dbReference type="Rhea" id="RHEA:42580"/>
        <dbReference type="Rhea" id="RHEA-COMP:9742"/>
        <dbReference type="Rhea" id="RHEA-COMP:10128"/>
        <dbReference type="ChEBI" id="CHEBI:15378"/>
        <dbReference type="ChEBI" id="CHEBI:30616"/>
        <dbReference type="ChEBI" id="CHEBI:33019"/>
        <dbReference type="ChEBI" id="CHEBI:33384"/>
        <dbReference type="ChEBI" id="CHEBI:78442"/>
        <dbReference type="ChEBI" id="CHEBI:78533"/>
        <dbReference type="ChEBI" id="CHEBI:456215"/>
        <dbReference type="EC" id="6.1.1.11"/>
    </reaction>
</comment>
<comment type="pathway">
    <text evidence="1">Aminoacyl-tRNA biosynthesis; selenocysteinyl-tRNA(Sec) biosynthesis; L-seryl-tRNA(Sec) from L-serine and tRNA(Sec): step 1/1.</text>
</comment>
<comment type="subunit">
    <text evidence="1">Homodimer. The tRNA molecule binds across the dimer.</text>
</comment>
<comment type="subcellular location">
    <subcellularLocation>
        <location evidence="1">Cytoplasm</location>
    </subcellularLocation>
</comment>
<comment type="domain">
    <text evidence="1">Consists of two distinct domains, a catalytic core and a N-terminal extension that is involved in tRNA binding.</text>
</comment>
<comment type="similarity">
    <text evidence="1">Belongs to the class-II aminoacyl-tRNA synthetase family. Type-1 seryl-tRNA synthetase subfamily.</text>
</comment>